<feature type="chain" id="PRO_1000086860" description="Small ribosomal subunit protein uS17">
    <location>
        <begin position="1"/>
        <end position="87"/>
    </location>
</feature>
<organism>
    <name type="scientific">Staphylococcus aureus (strain JH1)</name>
    <dbReference type="NCBI Taxonomy" id="359787"/>
    <lineage>
        <taxon>Bacteria</taxon>
        <taxon>Bacillati</taxon>
        <taxon>Bacillota</taxon>
        <taxon>Bacilli</taxon>
        <taxon>Bacillales</taxon>
        <taxon>Staphylococcaceae</taxon>
        <taxon>Staphylococcus</taxon>
    </lineage>
</organism>
<gene>
    <name evidence="1" type="primary">rpsQ</name>
    <name type="ordered locus">SaurJH1_2309</name>
</gene>
<protein>
    <recommendedName>
        <fullName evidence="1">Small ribosomal subunit protein uS17</fullName>
    </recommendedName>
    <alternativeName>
        <fullName evidence="2">30S ribosomal protein S17</fullName>
    </alternativeName>
</protein>
<comment type="function">
    <text evidence="1">One of the primary rRNA binding proteins, it binds specifically to the 5'-end of 16S ribosomal RNA.</text>
</comment>
<comment type="subunit">
    <text evidence="1">Part of the 30S ribosomal subunit.</text>
</comment>
<comment type="similarity">
    <text evidence="1">Belongs to the universal ribosomal protein uS17 family.</text>
</comment>
<sequence>MSERNDRKVYVGKVVSDKMDKTITVLVETYKTHKLYGKRVKYSKKYKTHDENNSAKLGDIVKIQETRPLSATKRFRLVEIVEESVII</sequence>
<proteinExistence type="inferred from homology"/>
<evidence type="ECO:0000255" key="1">
    <source>
        <dbReference type="HAMAP-Rule" id="MF_01345"/>
    </source>
</evidence>
<evidence type="ECO:0000305" key="2"/>
<keyword id="KW-0687">Ribonucleoprotein</keyword>
<keyword id="KW-0689">Ribosomal protein</keyword>
<keyword id="KW-0694">RNA-binding</keyword>
<keyword id="KW-0699">rRNA-binding</keyword>
<accession>A6U3W6</accession>
<dbReference type="EMBL" id="CP000736">
    <property type="protein sequence ID" value="ABR53134.1"/>
    <property type="molecule type" value="Genomic_DNA"/>
</dbReference>
<dbReference type="SMR" id="A6U3W6"/>
<dbReference type="KEGG" id="sah:SaurJH1_2309"/>
<dbReference type="HOGENOM" id="CLU_073626_1_0_9"/>
<dbReference type="GO" id="GO:0022627">
    <property type="term" value="C:cytosolic small ribosomal subunit"/>
    <property type="evidence" value="ECO:0007669"/>
    <property type="project" value="TreeGrafter"/>
</dbReference>
<dbReference type="GO" id="GO:0019843">
    <property type="term" value="F:rRNA binding"/>
    <property type="evidence" value="ECO:0007669"/>
    <property type="project" value="UniProtKB-UniRule"/>
</dbReference>
<dbReference type="GO" id="GO:0003735">
    <property type="term" value="F:structural constituent of ribosome"/>
    <property type="evidence" value="ECO:0007669"/>
    <property type="project" value="InterPro"/>
</dbReference>
<dbReference type="GO" id="GO:0006412">
    <property type="term" value="P:translation"/>
    <property type="evidence" value="ECO:0007669"/>
    <property type="project" value="UniProtKB-UniRule"/>
</dbReference>
<dbReference type="CDD" id="cd00364">
    <property type="entry name" value="Ribosomal_uS17"/>
    <property type="match status" value="1"/>
</dbReference>
<dbReference type="FunFam" id="2.40.50.140:FF:000026">
    <property type="entry name" value="30S ribosomal protein S17"/>
    <property type="match status" value="1"/>
</dbReference>
<dbReference type="Gene3D" id="2.40.50.140">
    <property type="entry name" value="Nucleic acid-binding proteins"/>
    <property type="match status" value="1"/>
</dbReference>
<dbReference type="HAMAP" id="MF_01345_B">
    <property type="entry name" value="Ribosomal_uS17_B"/>
    <property type="match status" value="1"/>
</dbReference>
<dbReference type="InterPro" id="IPR012340">
    <property type="entry name" value="NA-bd_OB-fold"/>
</dbReference>
<dbReference type="InterPro" id="IPR000266">
    <property type="entry name" value="Ribosomal_uS17"/>
</dbReference>
<dbReference type="InterPro" id="IPR019984">
    <property type="entry name" value="Ribosomal_uS17_bact/chlr"/>
</dbReference>
<dbReference type="InterPro" id="IPR019979">
    <property type="entry name" value="Ribosomal_uS17_CS"/>
</dbReference>
<dbReference type="NCBIfam" id="NF004123">
    <property type="entry name" value="PRK05610.1"/>
    <property type="match status" value="1"/>
</dbReference>
<dbReference type="NCBIfam" id="TIGR03635">
    <property type="entry name" value="uS17_bact"/>
    <property type="match status" value="1"/>
</dbReference>
<dbReference type="PANTHER" id="PTHR10744">
    <property type="entry name" value="40S RIBOSOMAL PROTEIN S11 FAMILY MEMBER"/>
    <property type="match status" value="1"/>
</dbReference>
<dbReference type="PANTHER" id="PTHR10744:SF1">
    <property type="entry name" value="SMALL RIBOSOMAL SUBUNIT PROTEIN US17M"/>
    <property type="match status" value="1"/>
</dbReference>
<dbReference type="Pfam" id="PF00366">
    <property type="entry name" value="Ribosomal_S17"/>
    <property type="match status" value="1"/>
</dbReference>
<dbReference type="PRINTS" id="PR00973">
    <property type="entry name" value="RIBOSOMALS17"/>
</dbReference>
<dbReference type="SUPFAM" id="SSF50249">
    <property type="entry name" value="Nucleic acid-binding proteins"/>
    <property type="match status" value="1"/>
</dbReference>
<dbReference type="PROSITE" id="PS00056">
    <property type="entry name" value="RIBOSOMAL_S17"/>
    <property type="match status" value="1"/>
</dbReference>
<name>RS17_STAA2</name>
<reference key="1">
    <citation type="submission" date="2007-06" db="EMBL/GenBank/DDBJ databases">
        <title>Complete sequence of chromosome of Staphylococcus aureus subsp. aureus JH1.</title>
        <authorList>
            <consortium name="US DOE Joint Genome Institute"/>
            <person name="Copeland A."/>
            <person name="Lucas S."/>
            <person name="Lapidus A."/>
            <person name="Barry K."/>
            <person name="Detter J.C."/>
            <person name="Glavina del Rio T."/>
            <person name="Hammon N."/>
            <person name="Israni S."/>
            <person name="Dalin E."/>
            <person name="Tice H."/>
            <person name="Pitluck S."/>
            <person name="Chain P."/>
            <person name="Malfatti S."/>
            <person name="Shin M."/>
            <person name="Vergez L."/>
            <person name="Schmutz J."/>
            <person name="Larimer F."/>
            <person name="Land M."/>
            <person name="Hauser L."/>
            <person name="Kyrpides N."/>
            <person name="Ivanova N."/>
            <person name="Tomasz A."/>
            <person name="Richardson P."/>
        </authorList>
    </citation>
    <scope>NUCLEOTIDE SEQUENCE [LARGE SCALE GENOMIC DNA]</scope>
    <source>
        <strain>JH1</strain>
    </source>
</reference>